<name>RELH_RABIT</name>
<sequence length="178" mass="20294">MPALLFYLLGFCLLQGQVTGRVTYEWMMENVKICRNDFVRTAIEVCGHVHLERESPSPENPFLSSGPAAETVPSSIKKDAENANTMLESIPNLPQELTATLFEKQPSKLYLQYLPTLKKSNVSFEEFKKIIQNIQRGVQGSSASESNTFSRKKRQFSESLPEECCKYGCPRYYLLMYC</sequence>
<evidence type="ECO:0000250" key="1"/>
<evidence type="ECO:0000269" key="2">
    <source>
    </source>
</evidence>
<evidence type="ECO:0000305" key="3"/>
<keyword id="KW-0165">Cleavage on pair of basic residues</keyword>
<keyword id="KW-0903">Direct protein sequencing</keyword>
<keyword id="KW-1015">Disulfide bond</keyword>
<keyword id="KW-0372">Hormone</keyword>
<keyword id="KW-1185">Reference proteome</keyword>
<keyword id="KW-0964">Secreted</keyword>
<keyword id="KW-0732">Signal</keyword>
<comment type="subunit">
    <text evidence="1">Heterodimer of a B chain and an A chain linked by two disulfide bonds.</text>
</comment>
<comment type="subcellular location">
    <subcellularLocation>
        <location evidence="1">Secreted</location>
    </subcellularLocation>
</comment>
<comment type="induction">
    <text>During squamous cell differentiation. Repressed by retinoic acid.</text>
</comment>
<comment type="similarity">
    <text evidence="3">Belongs to the insulin family.</text>
</comment>
<accession>P51456</accession>
<feature type="signal peptide" evidence="2">
    <location>
        <begin position="1"/>
        <end position="20"/>
    </location>
</feature>
<feature type="peptide" id="PRO_0000016127" description="Relaxin-like protein SQ10 B chain" evidence="1">
    <location>
        <begin position="21"/>
        <end position="52"/>
    </location>
</feature>
<feature type="propeptide" id="PRO_0000016128" description="Connecting peptide" evidence="1">
    <location>
        <begin position="54"/>
        <end position="150"/>
    </location>
</feature>
<feature type="peptide" id="PRO_0000016129" description="Relaxin-like protein SQ10 A chain" evidence="1">
    <location>
        <begin position="155"/>
        <end position="178"/>
    </location>
</feature>
<feature type="disulfide bond" description="Interchain (between B and A chains)" evidence="1">
    <location>
        <begin position="34"/>
        <end position="165"/>
    </location>
</feature>
<feature type="disulfide bond" description="Interchain (between B and A chains)" evidence="1">
    <location>
        <begin position="46"/>
        <end position="178"/>
    </location>
</feature>
<feature type="disulfide bond" evidence="1">
    <location>
        <begin position="164"/>
        <end position="169"/>
    </location>
</feature>
<proteinExistence type="evidence at protein level"/>
<protein>
    <recommendedName>
        <fullName>Relaxin-like protein SQ10</fullName>
    </recommendedName>
    <component>
        <recommendedName>
            <fullName>Relaxin-like protein SQ10 B chain</fullName>
        </recommendedName>
    </component>
    <component>
        <recommendedName>
            <fullName>Relaxin-like protein SQ10 A chain</fullName>
        </recommendedName>
    </component>
</protein>
<reference key="1">
    <citation type="journal article" date="1992" name="Cell Growth Differ.">
        <title>Expression of a preprorelaxin-like gene during squamous differentiation of rabbit tracheobronchial epithelial cells and its suppression by retinoic acid.</title>
        <authorList>
            <person name="Jetten A.M."/>
            <person name="Bernacki S.H."/>
            <person name="Floyd E.E."/>
            <person name="Saunders N.A."/>
            <person name="Pieniazek J."/>
            <person name="Lotan R."/>
        </authorList>
    </citation>
    <scope>NUCLEOTIDE SEQUENCE [MRNA]</scope>
    <scope>PROTEIN SEQUENCE OF 21-32; 54-77 AND 120-128</scope>
    <source>
        <tissue>Tracheobronchial epithelium</tissue>
    </source>
</reference>
<dbReference type="EMBL" id="S45940">
    <property type="protein sequence ID" value="AAB23648.1"/>
    <property type="molecule type" value="mRNA"/>
</dbReference>
<dbReference type="PIR" id="A49014">
    <property type="entry name" value="A49014"/>
</dbReference>
<dbReference type="RefSeq" id="NP_001075789.1">
    <property type="nucleotide sequence ID" value="NM_001082320.1"/>
</dbReference>
<dbReference type="FunCoup" id="P51456">
    <property type="interactions" value="34"/>
</dbReference>
<dbReference type="STRING" id="9986.ENSOCUP00000024474"/>
<dbReference type="PaxDb" id="9986-ENSOCUP00000024474"/>
<dbReference type="GeneID" id="100009160"/>
<dbReference type="KEGG" id="ocu:100009160"/>
<dbReference type="CTD" id="6013"/>
<dbReference type="eggNOG" id="ENOG502TH8D">
    <property type="taxonomic scope" value="Eukaryota"/>
</dbReference>
<dbReference type="InParanoid" id="P51456"/>
<dbReference type="OrthoDB" id="8784777at2759"/>
<dbReference type="Proteomes" id="UP000001811">
    <property type="component" value="Unplaced"/>
</dbReference>
<dbReference type="GO" id="GO:0005576">
    <property type="term" value="C:extracellular region"/>
    <property type="evidence" value="ECO:0007669"/>
    <property type="project" value="UniProtKB-SubCell"/>
</dbReference>
<dbReference type="GO" id="GO:0005179">
    <property type="term" value="F:hormone activity"/>
    <property type="evidence" value="ECO:0007669"/>
    <property type="project" value="UniProtKB-KW"/>
</dbReference>
<dbReference type="CDD" id="cd04365">
    <property type="entry name" value="IlGF_relaxin_like"/>
    <property type="match status" value="1"/>
</dbReference>
<dbReference type="InterPro" id="IPR016179">
    <property type="entry name" value="Insulin-like"/>
</dbReference>
<dbReference type="InterPro" id="IPR036438">
    <property type="entry name" value="Insulin-like_sf"/>
</dbReference>
<dbReference type="InterPro" id="IPR022353">
    <property type="entry name" value="Insulin_CS"/>
</dbReference>
<dbReference type="InterPro" id="IPR022421">
    <property type="entry name" value="Relaxin"/>
</dbReference>
<dbReference type="InterPro" id="IPR051042">
    <property type="entry name" value="Repro_Hormone_Insulin-like"/>
</dbReference>
<dbReference type="PANTHER" id="PTHR12004:SF13">
    <property type="entry name" value="PRORELAXIN H2"/>
    <property type="match status" value="1"/>
</dbReference>
<dbReference type="PANTHER" id="PTHR12004">
    <property type="entry name" value="RELAXIN"/>
    <property type="match status" value="1"/>
</dbReference>
<dbReference type="PRINTS" id="PR02004">
    <property type="entry name" value="RELAXIN"/>
</dbReference>
<dbReference type="SMART" id="SM00078">
    <property type="entry name" value="IlGF"/>
    <property type="match status" value="1"/>
</dbReference>
<dbReference type="SUPFAM" id="SSF56994">
    <property type="entry name" value="Insulin-like"/>
    <property type="match status" value="1"/>
</dbReference>
<dbReference type="PROSITE" id="PS00262">
    <property type="entry name" value="INSULIN"/>
    <property type="match status" value="1"/>
</dbReference>
<organism>
    <name type="scientific">Oryctolagus cuniculus</name>
    <name type="common">Rabbit</name>
    <dbReference type="NCBI Taxonomy" id="9986"/>
    <lineage>
        <taxon>Eukaryota</taxon>
        <taxon>Metazoa</taxon>
        <taxon>Chordata</taxon>
        <taxon>Craniata</taxon>
        <taxon>Vertebrata</taxon>
        <taxon>Euteleostomi</taxon>
        <taxon>Mammalia</taxon>
        <taxon>Eutheria</taxon>
        <taxon>Euarchontoglires</taxon>
        <taxon>Glires</taxon>
        <taxon>Lagomorpha</taxon>
        <taxon>Leporidae</taxon>
        <taxon>Oryctolagus</taxon>
    </lineage>
</organism>